<sequence>MRTHFCGLVDETLIGQTVTLAGWTDVARNLGGVCFIDLRDHEGIVQVTVEPVAGDDASAELFKVAASLGYEDVLQVEGVVRARHAVNDKLRTGKVEVIATRISILNKAAPLPFHAHENPGEETRLKYRYLDLRRPEMQRMQRTRIKLVQALRRHLDARDFQDIETPILTKATPEGARDFLVPARMHPGEFYALPQSPQLFKQILMVAGFDRYYQIARCFRDEALRADRQLEFTQLDMEFAFVRERDVQDFVEDMMRAIFKEVVDVDLAAQFPRMTWAEAMRRYGSDKPDLRIALELVDVAELVKSSEFPVFTAAANDADGRVAALRIPGGATLSRKQIDDYAAHAAKYGAKGLAYIKLSETGEVSSPIAKFFSEEAFAALLKHVGAGNGDIVFFGAGGYTKVSDFMGALRLKAGKEFDLVAEGWAPLWVTDFPMFEWDEEAQRYVALHHPFTAPAVDDIADLRANARTAVSRGYDMVLNGNEIGGGSIRIHRPDMQSAVFELLGIGAEEARAKFGFLLDALNYGAPPHGGIAFGIDRIAALMAGTESIRDVIPFPKTTGAQDLMTDAPSPIAADQLAEVHVQVRSKQV</sequence>
<reference key="1">
    <citation type="journal article" date="2005" name="Nucleic Acids Res.">
        <title>The genome sequence of Xanthomonas oryzae pathovar oryzae KACC10331, the bacterial blight pathogen of rice.</title>
        <authorList>
            <person name="Lee B.-M."/>
            <person name="Park Y.-J."/>
            <person name="Park D.-S."/>
            <person name="Kang H.-W."/>
            <person name="Kim J.-G."/>
            <person name="Song E.-S."/>
            <person name="Park I.-C."/>
            <person name="Yoon U.-H."/>
            <person name="Hahn J.-H."/>
            <person name="Koo B.-S."/>
            <person name="Lee G.-B."/>
            <person name="Kim H."/>
            <person name="Park H.-S."/>
            <person name="Yoon K.-O."/>
            <person name="Kim J.-H."/>
            <person name="Jung C.-H."/>
            <person name="Koh N.-H."/>
            <person name="Seo J.-S."/>
            <person name="Go S.-J."/>
        </authorList>
    </citation>
    <scope>NUCLEOTIDE SEQUENCE [LARGE SCALE GENOMIC DNA]</scope>
    <source>
        <strain>KACC10331 / KXO85</strain>
    </source>
</reference>
<feature type="chain" id="PRO_0000235581" description="Aspartate--tRNA ligase">
    <location>
        <begin position="1"/>
        <end position="588"/>
    </location>
</feature>
<feature type="region of interest" description="Aspartate" evidence="1">
    <location>
        <begin position="198"/>
        <end position="201"/>
    </location>
</feature>
<feature type="binding site" evidence="1">
    <location>
        <position position="174"/>
    </location>
    <ligand>
        <name>L-aspartate</name>
        <dbReference type="ChEBI" id="CHEBI:29991"/>
    </ligand>
</feature>
<feature type="binding site" evidence="1">
    <location>
        <begin position="220"/>
        <end position="222"/>
    </location>
    <ligand>
        <name>ATP</name>
        <dbReference type="ChEBI" id="CHEBI:30616"/>
    </ligand>
</feature>
<feature type="binding site" evidence="1">
    <location>
        <position position="220"/>
    </location>
    <ligand>
        <name>L-aspartate</name>
        <dbReference type="ChEBI" id="CHEBI:29991"/>
    </ligand>
</feature>
<feature type="binding site" evidence="1">
    <location>
        <position position="229"/>
    </location>
    <ligand>
        <name>ATP</name>
        <dbReference type="ChEBI" id="CHEBI:30616"/>
    </ligand>
</feature>
<feature type="binding site" evidence="1">
    <location>
        <position position="448"/>
    </location>
    <ligand>
        <name>L-aspartate</name>
        <dbReference type="ChEBI" id="CHEBI:29991"/>
    </ligand>
</feature>
<feature type="binding site" evidence="1">
    <location>
        <position position="482"/>
    </location>
    <ligand>
        <name>ATP</name>
        <dbReference type="ChEBI" id="CHEBI:30616"/>
    </ligand>
</feature>
<feature type="binding site" evidence="1">
    <location>
        <position position="489"/>
    </location>
    <ligand>
        <name>L-aspartate</name>
        <dbReference type="ChEBI" id="CHEBI:29991"/>
    </ligand>
</feature>
<feature type="binding site" evidence="1">
    <location>
        <begin position="534"/>
        <end position="537"/>
    </location>
    <ligand>
        <name>ATP</name>
        <dbReference type="ChEBI" id="CHEBI:30616"/>
    </ligand>
</feature>
<dbReference type="EC" id="6.1.1.12" evidence="1"/>
<dbReference type="EMBL" id="AE013598">
    <property type="protein sequence ID" value="AAW74910.1"/>
    <property type="status" value="ALT_INIT"/>
    <property type="molecule type" value="Genomic_DNA"/>
</dbReference>
<dbReference type="SMR" id="Q5H2B1"/>
<dbReference type="STRING" id="291331.XOO1656"/>
<dbReference type="KEGG" id="xoo:XOO1656"/>
<dbReference type="HOGENOM" id="CLU_014330_3_2_6"/>
<dbReference type="Proteomes" id="UP000006735">
    <property type="component" value="Chromosome"/>
</dbReference>
<dbReference type="GO" id="GO:0005737">
    <property type="term" value="C:cytoplasm"/>
    <property type="evidence" value="ECO:0007669"/>
    <property type="project" value="UniProtKB-SubCell"/>
</dbReference>
<dbReference type="GO" id="GO:0004815">
    <property type="term" value="F:aspartate-tRNA ligase activity"/>
    <property type="evidence" value="ECO:0007669"/>
    <property type="project" value="UniProtKB-UniRule"/>
</dbReference>
<dbReference type="GO" id="GO:0005524">
    <property type="term" value="F:ATP binding"/>
    <property type="evidence" value="ECO:0007669"/>
    <property type="project" value="UniProtKB-UniRule"/>
</dbReference>
<dbReference type="GO" id="GO:0003676">
    <property type="term" value="F:nucleic acid binding"/>
    <property type="evidence" value="ECO:0007669"/>
    <property type="project" value="InterPro"/>
</dbReference>
<dbReference type="GO" id="GO:0006422">
    <property type="term" value="P:aspartyl-tRNA aminoacylation"/>
    <property type="evidence" value="ECO:0007669"/>
    <property type="project" value="UniProtKB-UniRule"/>
</dbReference>
<dbReference type="CDD" id="cd00777">
    <property type="entry name" value="AspRS_core"/>
    <property type="match status" value="1"/>
</dbReference>
<dbReference type="CDD" id="cd04317">
    <property type="entry name" value="EcAspRS_like_N"/>
    <property type="match status" value="1"/>
</dbReference>
<dbReference type="Gene3D" id="3.30.930.10">
    <property type="entry name" value="Bira Bifunctional Protein, Domain 2"/>
    <property type="match status" value="1"/>
</dbReference>
<dbReference type="Gene3D" id="3.30.1360.30">
    <property type="entry name" value="GAD-like domain"/>
    <property type="match status" value="1"/>
</dbReference>
<dbReference type="Gene3D" id="2.40.50.140">
    <property type="entry name" value="Nucleic acid-binding proteins"/>
    <property type="match status" value="1"/>
</dbReference>
<dbReference type="HAMAP" id="MF_00044">
    <property type="entry name" value="Asp_tRNA_synth_type1"/>
    <property type="match status" value="1"/>
</dbReference>
<dbReference type="InterPro" id="IPR004364">
    <property type="entry name" value="Aa-tRNA-synt_II"/>
</dbReference>
<dbReference type="InterPro" id="IPR006195">
    <property type="entry name" value="aa-tRNA-synth_II"/>
</dbReference>
<dbReference type="InterPro" id="IPR045864">
    <property type="entry name" value="aa-tRNA-synth_II/BPL/LPL"/>
</dbReference>
<dbReference type="InterPro" id="IPR004524">
    <property type="entry name" value="Asp-tRNA-ligase_1"/>
</dbReference>
<dbReference type="InterPro" id="IPR047089">
    <property type="entry name" value="Asp-tRNA-ligase_1_N"/>
</dbReference>
<dbReference type="InterPro" id="IPR002312">
    <property type="entry name" value="Asp/Asn-tRNA-synth_IIb"/>
</dbReference>
<dbReference type="InterPro" id="IPR047090">
    <property type="entry name" value="AspRS_core"/>
</dbReference>
<dbReference type="InterPro" id="IPR004115">
    <property type="entry name" value="GAD-like_sf"/>
</dbReference>
<dbReference type="InterPro" id="IPR029351">
    <property type="entry name" value="GAD_dom"/>
</dbReference>
<dbReference type="InterPro" id="IPR012340">
    <property type="entry name" value="NA-bd_OB-fold"/>
</dbReference>
<dbReference type="InterPro" id="IPR004365">
    <property type="entry name" value="NA-bd_OB_tRNA"/>
</dbReference>
<dbReference type="NCBIfam" id="TIGR00459">
    <property type="entry name" value="aspS_bact"/>
    <property type="match status" value="1"/>
</dbReference>
<dbReference type="NCBIfam" id="NF001750">
    <property type="entry name" value="PRK00476.1"/>
    <property type="match status" value="1"/>
</dbReference>
<dbReference type="PANTHER" id="PTHR22594:SF5">
    <property type="entry name" value="ASPARTATE--TRNA LIGASE, MITOCHONDRIAL"/>
    <property type="match status" value="1"/>
</dbReference>
<dbReference type="PANTHER" id="PTHR22594">
    <property type="entry name" value="ASPARTYL/LYSYL-TRNA SYNTHETASE"/>
    <property type="match status" value="1"/>
</dbReference>
<dbReference type="Pfam" id="PF02938">
    <property type="entry name" value="GAD"/>
    <property type="match status" value="1"/>
</dbReference>
<dbReference type="Pfam" id="PF00152">
    <property type="entry name" value="tRNA-synt_2"/>
    <property type="match status" value="1"/>
</dbReference>
<dbReference type="Pfam" id="PF01336">
    <property type="entry name" value="tRNA_anti-codon"/>
    <property type="match status" value="1"/>
</dbReference>
<dbReference type="PRINTS" id="PR01042">
    <property type="entry name" value="TRNASYNTHASP"/>
</dbReference>
<dbReference type="SUPFAM" id="SSF55681">
    <property type="entry name" value="Class II aaRS and biotin synthetases"/>
    <property type="match status" value="1"/>
</dbReference>
<dbReference type="SUPFAM" id="SSF55261">
    <property type="entry name" value="GAD domain-like"/>
    <property type="match status" value="1"/>
</dbReference>
<dbReference type="SUPFAM" id="SSF50249">
    <property type="entry name" value="Nucleic acid-binding proteins"/>
    <property type="match status" value="1"/>
</dbReference>
<dbReference type="PROSITE" id="PS50862">
    <property type="entry name" value="AA_TRNA_LIGASE_II"/>
    <property type="match status" value="1"/>
</dbReference>
<organism>
    <name type="scientific">Xanthomonas oryzae pv. oryzae (strain KACC10331 / KXO85)</name>
    <dbReference type="NCBI Taxonomy" id="291331"/>
    <lineage>
        <taxon>Bacteria</taxon>
        <taxon>Pseudomonadati</taxon>
        <taxon>Pseudomonadota</taxon>
        <taxon>Gammaproteobacteria</taxon>
        <taxon>Lysobacterales</taxon>
        <taxon>Lysobacteraceae</taxon>
        <taxon>Xanthomonas</taxon>
    </lineage>
</organism>
<proteinExistence type="inferred from homology"/>
<protein>
    <recommendedName>
        <fullName evidence="1">Aspartate--tRNA ligase</fullName>
        <ecNumber evidence="1">6.1.1.12</ecNumber>
    </recommendedName>
    <alternativeName>
        <fullName evidence="1">Aspartyl-tRNA synthetase</fullName>
        <shortName evidence="1">AspRS</shortName>
    </alternativeName>
</protein>
<evidence type="ECO:0000255" key="1">
    <source>
        <dbReference type="HAMAP-Rule" id="MF_00044"/>
    </source>
</evidence>
<evidence type="ECO:0000305" key="2"/>
<comment type="function">
    <text evidence="1">Catalyzes the attachment of L-aspartate to tRNA(Asp) in a two-step reaction: L-aspartate is first activated by ATP to form Asp-AMP and then transferred to the acceptor end of tRNA(Asp).</text>
</comment>
<comment type="catalytic activity">
    <reaction evidence="1">
        <text>tRNA(Asp) + L-aspartate + ATP = L-aspartyl-tRNA(Asp) + AMP + diphosphate</text>
        <dbReference type="Rhea" id="RHEA:19649"/>
        <dbReference type="Rhea" id="RHEA-COMP:9660"/>
        <dbReference type="Rhea" id="RHEA-COMP:9678"/>
        <dbReference type="ChEBI" id="CHEBI:29991"/>
        <dbReference type="ChEBI" id="CHEBI:30616"/>
        <dbReference type="ChEBI" id="CHEBI:33019"/>
        <dbReference type="ChEBI" id="CHEBI:78442"/>
        <dbReference type="ChEBI" id="CHEBI:78516"/>
        <dbReference type="ChEBI" id="CHEBI:456215"/>
        <dbReference type="EC" id="6.1.1.12"/>
    </reaction>
</comment>
<comment type="subunit">
    <text evidence="1">Homodimer.</text>
</comment>
<comment type="subcellular location">
    <subcellularLocation>
        <location evidence="1">Cytoplasm</location>
    </subcellularLocation>
</comment>
<comment type="similarity">
    <text evidence="1">Belongs to the class-II aminoacyl-tRNA synthetase family. Type 1 subfamily.</text>
</comment>
<comment type="sequence caution" evidence="2">
    <conflict type="erroneous initiation">
        <sequence resource="EMBL-CDS" id="AAW74910"/>
    </conflict>
    <text>Extended N-terminus.</text>
</comment>
<name>SYD_XANOR</name>
<gene>
    <name evidence="1" type="primary">aspS</name>
    <name type="ordered locus">XOO1656</name>
</gene>
<keyword id="KW-0030">Aminoacyl-tRNA synthetase</keyword>
<keyword id="KW-0067">ATP-binding</keyword>
<keyword id="KW-0963">Cytoplasm</keyword>
<keyword id="KW-0436">Ligase</keyword>
<keyword id="KW-0547">Nucleotide-binding</keyword>
<keyword id="KW-0648">Protein biosynthesis</keyword>
<keyword id="KW-1185">Reference proteome</keyword>
<accession>Q5H2B1</accession>